<sequence length="436" mass="48522">MAPPKKTVKKMDLTSFLNDDTFGSSWAEEDVDLNKITIPIETANANTIPLSELAHAKNNSNNTRSGGFGGSFGGRSRLDPALGGGSSDRREEYPVPDAPPYRAVINNIPWDITPEGVQAWVEDGLVKPEAVEEVVLPKNLRDPTRLKGNAFVTLKERADLVAVLKFNGTKLNERTVYVSVAAPRRGGGADVDWSSARGSNFQGDGREDAPDLDWGAARGSNFRGPRREREEVDIDWTAARGSNFQGSSRPPRREREEVDIDWSAARGSNFQGSSRPPRREREEPDIDWSAARGSNFQSSSRPPRREREEPDIDWSAARGSNFQSSSRPPRREREKEEPALDWGAARGAQFGKPQQTKNTYKDRSLTNKKTTDEQPKIQKSVYDVLRTEDDDEDEEAEKQNGDAKENKVDAAVEKLQDKTAQLTVEDGDNWEVVGKK</sequence>
<comment type="function">
    <text>Involved in translation initiation. May be the homolog of mammalian eIF4B and be part of an RNA helicase. STM1/TIF3 is a non-essential gene.</text>
</comment>
<comment type="miscellaneous">
    <text evidence="3">Present with 24000 molecules/cell in log phase SD medium.</text>
</comment>
<organism>
    <name type="scientific">Saccharomyces cerevisiae (strain ATCC 204508 / S288c)</name>
    <name type="common">Baker's yeast</name>
    <dbReference type="NCBI Taxonomy" id="559292"/>
    <lineage>
        <taxon>Eukaryota</taxon>
        <taxon>Fungi</taxon>
        <taxon>Dikarya</taxon>
        <taxon>Ascomycota</taxon>
        <taxon>Saccharomycotina</taxon>
        <taxon>Saccharomycetes</taxon>
        <taxon>Saccharomycetales</taxon>
        <taxon>Saccharomycetaceae</taxon>
        <taxon>Saccharomyces</taxon>
    </lineage>
</organism>
<feature type="chain" id="PRO_0000081618" description="Eukaryotic translation initiation factor 4B">
    <location>
        <begin position="1"/>
        <end position="436"/>
    </location>
</feature>
<feature type="domain" description="RRM" evidence="1">
    <location>
        <begin position="101"/>
        <end position="183"/>
    </location>
</feature>
<feature type="repeat" description="1; approximate">
    <location>
        <begin position="190"/>
        <end position="210"/>
    </location>
</feature>
<feature type="repeat" description="2">
    <location>
        <begin position="211"/>
        <end position="232"/>
    </location>
</feature>
<feature type="repeat" description="3">
    <location>
        <begin position="233"/>
        <end position="258"/>
    </location>
</feature>
<feature type="repeat" description="4">
    <location>
        <begin position="259"/>
        <end position="284"/>
    </location>
</feature>
<feature type="repeat" description="5">
    <location>
        <begin position="285"/>
        <end position="310"/>
    </location>
</feature>
<feature type="repeat" description="6">
    <location>
        <begin position="311"/>
        <end position="340"/>
    </location>
</feature>
<feature type="repeat" description="7; truncated">
    <location>
        <begin position="341"/>
        <end position="350"/>
    </location>
</feature>
<feature type="region of interest" description="Disordered" evidence="2">
    <location>
        <begin position="56"/>
        <end position="98"/>
    </location>
</feature>
<feature type="region of interest" description="Disordered" evidence="2">
    <location>
        <begin position="185"/>
        <end position="406"/>
    </location>
</feature>
<feature type="region of interest" description="7 X approximate tandem repeats">
    <location>
        <begin position="190"/>
        <end position="350"/>
    </location>
</feature>
<feature type="compositionally biased region" description="Basic and acidic residues" evidence="2">
    <location>
        <begin position="329"/>
        <end position="338"/>
    </location>
</feature>
<feature type="compositionally biased region" description="Basic and acidic residues" evidence="2">
    <location>
        <begin position="359"/>
        <end position="376"/>
    </location>
</feature>
<feature type="compositionally biased region" description="Basic and acidic residues" evidence="2">
    <location>
        <begin position="397"/>
        <end position="406"/>
    </location>
</feature>
<feature type="modified residue" description="Phosphoserine" evidence="5 6">
    <location>
        <position position="65"/>
    </location>
</feature>
<feature type="modified residue" description="Phosphoserine" evidence="5 6">
    <location>
        <position position="71"/>
    </location>
</feature>
<feature type="mutagenesis site" description="Retention of function." evidence="4">
    <original>N</original>
    <variation>G</variation>
    <variation>V</variation>
    <variation>Y</variation>
    <location>
        <position position="106"/>
    </location>
</feature>
<feature type="mutagenesis site" description="Loss of function." evidence="4">
    <original>N</original>
    <variation>S</variation>
    <variation>P</variation>
    <location>
        <position position="106"/>
    </location>
</feature>
<feature type="mutagenesis site" description="Retention of function." evidence="4">
    <original>A</original>
    <variation>S</variation>
    <variation>C</variation>
    <location>
        <position position="150"/>
    </location>
</feature>
<feature type="mutagenesis site" description="Loss of function." evidence="4">
    <original>A</original>
    <variation>Y</variation>
    <variation>F</variation>
    <variation>N</variation>
    <variation>L</variation>
    <location>
        <position position="150"/>
    </location>
</feature>
<dbReference type="EMBL" id="X71996">
    <property type="protein sequence ID" value="CAA50870.1"/>
    <property type="molecule type" value="Genomic_DNA"/>
</dbReference>
<dbReference type="EMBL" id="U25840">
    <property type="protein sequence ID" value="AAB68150.1"/>
    <property type="molecule type" value="Genomic_DNA"/>
</dbReference>
<dbReference type="EMBL" id="AY693114">
    <property type="protein sequence ID" value="AAT93133.1"/>
    <property type="molecule type" value="Genomic_DNA"/>
</dbReference>
<dbReference type="EMBL" id="BK006949">
    <property type="protein sequence ID" value="DAA11580.1"/>
    <property type="molecule type" value="Genomic_DNA"/>
</dbReference>
<dbReference type="PIR" id="S37302">
    <property type="entry name" value="S37302"/>
</dbReference>
<dbReference type="RefSeq" id="NP_015489.1">
    <property type="nucleotide sequence ID" value="NM_001184260.1"/>
</dbReference>
<dbReference type="SMR" id="P34167"/>
<dbReference type="BioGRID" id="36336">
    <property type="interactions" value="92"/>
</dbReference>
<dbReference type="DIP" id="DIP-3806N"/>
<dbReference type="FunCoup" id="P34167">
    <property type="interactions" value="76"/>
</dbReference>
<dbReference type="IntAct" id="P34167">
    <property type="interactions" value="17"/>
</dbReference>
<dbReference type="MINT" id="P34167"/>
<dbReference type="STRING" id="4932.YPR163C"/>
<dbReference type="iPTMnet" id="P34167"/>
<dbReference type="PaxDb" id="4932-YPR163C"/>
<dbReference type="PeptideAtlas" id="P34167"/>
<dbReference type="TopDownProteomics" id="P34167"/>
<dbReference type="EnsemblFungi" id="YPR163C_mRNA">
    <property type="protein sequence ID" value="YPR163C"/>
    <property type="gene ID" value="YPR163C"/>
</dbReference>
<dbReference type="GeneID" id="856292"/>
<dbReference type="KEGG" id="sce:YPR163C"/>
<dbReference type="AGR" id="SGD:S000006367"/>
<dbReference type="SGD" id="S000006367">
    <property type="gene designation" value="TIF3"/>
</dbReference>
<dbReference type="VEuPathDB" id="FungiDB:YPR163C"/>
<dbReference type="eggNOG" id="KOG0118">
    <property type="taxonomic scope" value="Eukaryota"/>
</dbReference>
<dbReference type="HOGENOM" id="CLU_045870_0_0_1"/>
<dbReference type="InParanoid" id="P34167"/>
<dbReference type="OMA" id="WDSARGS"/>
<dbReference type="OrthoDB" id="48651at2759"/>
<dbReference type="BioCyc" id="YEAST:G3O-34292-MONOMER"/>
<dbReference type="Reactome" id="R-SCE-156827">
    <property type="pathway name" value="L13a-mediated translational silencing of Ceruloplasmin expression"/>
</dbReference>
<dbReference type="Reactome" id="R-SCE-166208">
    <property type="pathway name" value="mTORC1-mediated signalling"/>
</dbReference>
<dbReference type="Reactome" id="R-SCE-429947">
    <property type="pathway name" value="Deadenylation of mRNA"/>
</dbReference>
<dbReference type="Reactome" id="R-SCE-72649">
    <property type="pathway name" value="Translation initiation complex formation"/>
</dbReference>
<dbReference type="Reactome" id="R-SCE-72662">
    <property type="pathway name" value="Activation of the mRNA upon binding of the cap-binding complex and eIFs, and subsequent binding to 43S"/>
</dbReference>
<dbReference type="Reactome" id="R-SCE-72702">
    <property type="pathway name" value="Ribosomal scanning and start codon recognition"/>
</dbReference>
<dbReference type="BioGRID-ORCS" id="856292">
    <property type="hits" value="6 hits in 10 CRISPR screens"/>
</dbReference>
<dbReference type="PRO" id="PR:P34167"/>
<dbReference type="Proteomes" id="UP000002311">
    <property type="component" value="Chromosome XVI"/>
</dbReference>
<dbReference type="RNAct" id="P34167">
    <property type="molecule type" value="protein"/>
</dbReference>
<dbReference type="GO" id="GO:0010494">
    <property type="term" value="C:cytoplasmic stress granule"/>
    <property type="evidence" value="ECO:0007005"/>
    <property type="project" value="SGD"/>
</dbReference>
<dbReference type="GO" id="GO:0005730">
    <property type="term" value="C:nucleolus"/>
    <property type="evidence" value="ECO:0000318"/>
    <property type="project" value="GO_Central"/>
</dbReference>
<dbReference type="GO" id="GO:0003729">
    <property type="term" value="F:mRNA binding"/>
    <property type="evidence" value="ECO:0007005"/>
    <property type="project" value="SGD"/>
</dbReference>
<dbReference type="GO" id="GO:0043024">
    <property type="term" value="F:ribosomal small subunit binding"/>
    <property type="evidence" value="ECO:0000314"/>
    <property type="project" value="SGD"/>
</dbReference>
<dbReference type="GO" id="GO:0003723">
    <property type="term" value="F:RNA binding"/>
    <property type="evidence" value="ECO:0000314"/>
    <property type="project" value="SGD"/>
</dbReference>
<dbReference type="GO" id="GO:0033592">
    <property type="term" value="F:RNA strand annealing activity"/>
    <property type="evidence" value="ECO:0000314"/>
    <property type="project" value="SGD"/>
</dbReference>
<dbReference type="GO" id="GO:0034057">
    <property type="term" value="F:RNA strand-exchange activity"/>
    <property type="evidence" value="ECO:0000314"/>
    <property type="project" value="SGD"/>
</dbReference>
<dbReference type="GO" id="GO:0003727">
    <property type="term" value="F:single-stranded RNA binding"/>
    <property type="evidence" value="ECO:0000314"/>
    <property type="project" value="SGD"/>
</dbReference>
<dbReference type="GO" id="GO:0003743">
    <property type="term" value="F:translation initiation factor activity"/>
    <property type="evidence" value="ECO:0007669"/>
    <property type="project" value="UniProtKB-KW"/>
</dbReference>
<dbReference type="GO" id="GO:0002181">
    <property type="term" value="P:cytoplasmic translation"/>
    <property type="evidence" value="ECO:0000315"/>
    <property type="project" value="SGD"/>
</dbReference>
<dbReference type="GO" id="GO:0097010">
    <property type="term" value="P:eukaryotic translation initiation factor 4F complex assembly"/>
    <property type="evidence" value="ECO:0000315"/>
    <property type="project" value="SGD"/>
</dbReference>
<dbReference type="GO" id="GO:0001731">
    <property type="term" value="P:formation of translation preinitiation complex"/>
    <property type="evidence" value="ECO:0000315"/>
    <property type="project" value="SGD"/>
</dbReference>
<dbReference type="GO" id="GO:0006413">
    <property type="term" value="P:translational initiation"/>
    <property type="evidence" value="ECO:0000314"/>
    <property type="project" value="SGD"/>
</dbReference>
<dbReference type="CDD" id="cd12514">
    <property type="entry name" value="RRM4_RBM12_like"/>
    <property type="match status" value="1"/>
</dbReference>
<dbReference type="FunFam" id="3.30.70.330:FF:000826">
    <property type="entry name" value="Translation initiation factor eIF4B"/>
    <property type="match status" value="1"/>
</dbReference>
<dbReference type="Gene3D" id="3.30.70.330">
    <property type="match status" value="1"/>
</dbReference>
<dbReference type="InterPro" id="IPR012677">
    <property type="entry name" value="Nucleotide-bd_a/b_plait_sf"/>
</dbReference>
<dbReference type="InterPro" id="IPR035979">
    <property type="entry name" value="RBD_domain_sf"/>
</dbReference>
<dbReference type="InterPro" id="IPR000504">
    <property type="entry name" value="RRM_dom"/>
</dbReference>
<dbReference type="SMART" id="SM00360">
    <property type="entry name" value="RRM"/>
    <property type="match status" value="1"/>
</dbReference>
<dbReference type="SUPFAM" id="SSF54928">
    <property type="entry name" value="RNA-binding domain, RBD"/>
    <property type="match status" value="1"/>
</dbReference>
<dbReference type="PROSITE" id="PS50102">
    <property type="entry name" value="RRM"/>
    <property type="match status" value="1"/>
</dbReference>
<accession>P34167</accession>
<accession>D6W4G4</accession>
<evidence type="ECO:0000255" key="1">
    <source>
        <dbReference type="PROSITE-ProRule" id="PRU00176"/>
    </source>
</evidence>
<evidence type="ECO:0000256" key="2">
    <source>
        <dbReference type="SAM" id="MobiDB-lite"/>
    </source>
</evidence>
<evidence type="ECO:0000269" key="3">
    <source>
    </source>
</evidence>
<evidence type="ECO:0000269" key="4">
    <source>
    </source>
</evidence>
<evidence type="ECO:0007744" key="5">
    <source>
    </source>
</evidence>
<evidence type="ECO:0007744" key="6">
    <source>
    </source>
</evidence>
<reference key="1">
    <citation type="journal article" date="1993" name="EMBO J.">
        <title>A Saccharomyces cerevisiae homologue of mammalian translation initiation factor 4B contributes to RNA helicase activity.</title>
        <authorList>
            <person name="Altmann M."/>
            <person name="Mueller P.P."/>
            <person name="Wittmer B."/>
            <person name="Ruchti F."/>
            <person name="Lanker S."/>
            <person name="Trachsel H."/>
        </authorList>
    </citation>
    <scope>NUCLEOTIDE SEQUENCE [GENOMIC DNA]</scope>
</reference>
<reference key="2">
    <citation type="journal article" date="1993" name="EMBO J.">
        <title>A new yeast translation initiation factor suppresses a mutation in the eIF-4A RNA helicase.</title>
        <authorList>
            <person name="Coppolecchia R."/>
            <person name="Buser P."/>
            <person name="Stotz A."/>
            <person name="Linder P."/>
        </authorList>
    </citation>
    <scope>NUCLEOTIDE SEQUENCE [GENOMIC DNA]</scope>
    <scope>MUTAGENESIS</scope>
</reference>
<reference key="3">
    <citation type="journal article" date="1997" name="Nature">
        <title>The nucleotide sequence of Saccharomyces cerevisiae chromosome XVI.</title>
        <authorList>
            <person name="Bussey H."/>
            <person name="Storms R.K."/>
            <person name="Ahmed A."/>
            <person name="Albermann K."/>
            <person name="Allen E."/>
            <person name="Ansorge W."/>
            <person name="Araujo R."/>
            <person name="Aparicio A."/>
            <person name="Barrell B.G."/>
            <person name="Badcock K."/>
            <person name="Benes V."/>
            <person name="Botstein D."/>
            <person name="Bowman S."/>
            <person name="Brueckner M."/>
            <person name="Carpenter J."/>
            <person name="Cherry J.M."/>
            <person name="Chung E."/>
            <person name="Churcher C.M."/>
            <person name="Coster F."/>
            <person name="Davis K."/>
            <person name="Davis R.W."/>
            <person name="Dietrich F.S."/>
            <person name="Delius H."/>
            <person name="DiPaolo T."/>
            <person name="Dubois E."/>
            <person name="Duesterhoeft A."/>
            <person name="Duncan M."/>
            <person name="Floeth M."/>
            <person name="Fortin N."/>
            <person name="Friesen J.D."/>
            <person name="Fritz C."/>
            <person name="Goffeau A."/>
            <person name="Hall J."/>
            <person name="Hebling U."/>
            <person name="Heumann K."/>
            <person name="Hilbert H."/>
            <person name="Hillier L.W."/>
            <person name="Hunicke-Smith S."/>
            <person name="Hyman R.W."/>
            <person name="Johnston M."/>
            <person name="Kalman S."/>
            <person name="Kleine K."/>
            <person name="Komp C."/>
            <person name="Kurdi O."/>
            <person name="Lashkari D."/>
            <person name="Lew H."/>
            <person name="Lin A."/>
            <person name="Lin D."/>
            <person name="Louis E.J."/>
            <person name="Marathe R."/>
            <person name="Messenguy F."/>
            <person name="Mewes H.-W."/>
            <person name="Mirtipati S."/>
            <person name="Moestl D."/>
            <person name="Mueller-Auer S."/>
            <person name="Namath A."/>
            <person name="Nentwich U."/>
            <person name="Oefner P."/>
            <person name="Pearson D."/>
            <person name="Petel F.X."/>
            <person name="Pohl T.M."/>
            <person name="Purnelle B."/>
            <person name="Rajandream M.A."/>
            <person name="Rechmann S."/>
            <person name="Rieger M."/>
            <person name="Riles L."/>
            <person name="Roberts D."/>
            <person name="Schaefer M."/>
            <person name="Scharfe M."/>
            <person name="Scherens B."/>
            <person name="Schramm S."/>
            <person name="Schroeder M."/>
            <person name="Sdicu A.-M."/>
            <person name="Tettelin H."/>
            <person name="Urrestarazu L.A."/>
            <person name="Ushinsky S."/>
            <person name="Vierendeels F."/>
            <person name="Vissers S."/>
            <person name="Voss H."/>
            <person name="Walsh S.V."/>
            <person name="Wambutt R."/>
            <person name="Wang Y."/>
            <person name="Wedler E."/>
            <person name="Wedler H."/>
            <person name="Winnett E."/>
            <person name="Zhong W.-W."/>
            <person name="Zollner A."/>
            <person name="Vo D.H."/>
            <person name="Hani J."/>
        </authorList>
    </citation>
    <scope>NUCLEOTIDE SEQUENCE [LARGE SCALE GENOMIC DNA]</scope>
    <source>
        <strain>ATCC 204508 / S288c</strain>
    </source>
</reference>
<reference key="4">
    <citation type="journal article" date="2014" name="G3 (Bethesda)">
        <title>The reference genome sequence of Saccharomyces cerevisiae: Then and now.</title>
        <authorList>
            <person name="Engel S.R."/>
            <person name="Dietrich F.S."/>
            <person name="Fisk D.G."/>
            <person name="Binkley G."/>
            <person name="Balakrishnan R."/>
            <person name="Costanzo M.C."/>
            <person name="Dwight S.S."/>
            <person name="Hitz B.C."/>
            <person name="Karra K."/>
            <person name="Nash R.S."/>
            <person name="Weng S."/>
            <person name="Wong E.D."/>
            <person name="Lloyd P."/>
            <person name="Skrzypek M.S."/>
            <person name="Miyasato S.R."/>
            <person name="Simison M."/>
            <person name="Cherry J.M."/>
        </authorList>
    </citation>
    <scope>GENOME REANNOTATION</scope>
    <source>
        <strain>ATCC 204508 / S288c</strain>
    </source>
</reference>
<reference key="5">
    <citation type="journal article" date="2007" name="Genome Res.">
        <title>Approaching a complete repository of sequence-verified protein-encoding clones for Saccharomyces cerevisiae.</title>
        <authorList>
            <person name="Hu Y."/>
            <person name="Rolfs A."/>
            <person name="Bhullar B."/>
            <person name="Murthy T.V.S."/>
            <person name="Zhu C."/>
            <person name="Berger M.F."/>
            <person name="Camargo A.A."/>
            <person name="Kelley F."/>
            <person name="McCarron S."/>
            <person name="Jepson D."/>
            <person name="Richardson A."/>
            <person name="Raphael J."/>
            <person name="Moreira D."/>
            <person name="Taycher E."/>
            <person name="Zuo D."/>
            <person name="Mohr S."/>
            <person name="Kane M.F."/>
            <person name="Williamson J."/>
            <person name="Simpson A.J.G."/>
            <person name="Bulyk M.L."/>
            <person name="Harlow E."/>
            <person name="Marsischky G."/>
            <person name="Kolodner R.D."/>
            <person name="LaBaer J."/>
        </authorList>
    </citation>
    <scope>NUCLEOTIDE SEQUENCE [GENOMIC DNA]</scope>
    <source>
        <strain>ATCC 204508 / S288c</strain>
    </source>
</reference>
<reference key="6">
    <citation type="journal article" date="2003" name="Nature">
        <title>Global analysis of protein expression in yeast.</title>
        <authorList>
            <person name="Ghaemmaghami S."/>
            <person name="Huh W.-K."/>
            <person name="Bower K."/>
            <person name="Howson R.W."/>
            <person name="Belle A."/>
            <person name="Dephoure N."/>
            <person name="O'Shea E.K."/>
            <person name="Weissman J.S."/>
        </authorList>
    </citation>
    <scope>LEVEL OF PROTEIN EXPRESSION [LARGE SCALE ANALYSIS]</scope>
</reference>
<reference key="7">
    <citation type="journal article" date="2008" name="Mol. Cell. Proteomics">
        <title>A multidimensional chromatography technology for in-depth phosphoproteome analysis.</title>
        <authorList>
            <person name="Albuquerque C.P."/>
            <person name="Smolka M.B."/>
            <person name="Payne S.H."/>
            <person name="Bafna V."/>
            <person name="Eng J."/>
            <person name="Zhou H."/>
        </authorList>
    </citation>
    <scope>PHOSPHORYLATION [LARGE SCALE ANALYSIS] AT SER-65 AND SER-71</scope>
    <scope>IDENTIFICATION BY MASS SPECTROMETRY [LARGE SCALE ANALYSIS]</scope>
</reference>
<reference key="8">
    <citation type="journal article" date="2009" name="Science">
        <title>Global analysis of Cdk1 substrate phosphorylation sites provides insights into evolution.</title>
        <authorList>
            <person name="Holt L.J."/>
            <person name="Tuch B.B."/>
            <person name="Villen J."/>
            <person name="Johnson A.D."/>
            <person name="Gygi S.P."/>
            <person name="Morgan D.O."/>
        </authorList>
    </citation>
    <scope>PHOSPHORYLATION [LARGE SCALE ANALYSIS] AT SER-65 AND SER-71</scope>
    <scope>IDENTIFICATION BY MASS SPECTROMETRY [LARGE SCALE ANALYSIS]</scope>
</reference>
<name>IF4B_YEAST</name>
<keyword id="KW-0396">Initiation factor</keyword>
<keyword id="KW-0597">Phosphoprotein</keyword>
<keyword id="KW-0648">Protein biosynthesis</keyword>
<keyword id="KW-1185">Reference proteome</keyword>
<keyword id="KW-0677">Repeat</keyword>
<keyword id="KW-0694">RNA-binding</keyword>
<proteinExistence type="evidence at protein level"/>
<protein>
    <recommendedName>
        <fullName>Eukaryotic translation initiation factor 4B</fullName>
        <shortName>eIF-4B</shortName>
    </recommendedName>
</protein>
<gene>
    <name type="primary">TIF3</name>
    <name type="synonym">STM1</name>
    <name type="synonym">TIF42</name>
    <name type="ordered locus">YPR163C</name>
    <name type="ORF">P9325.6</name>
</gene>